<gene>
    <name evidence="9" type="primary">fieF</name>
    <name evidence="7" type="synonym">yiiP</name>
    <name evidence="9" type="ordered locus">SO_4475</name>
</gene>
<proteinExistence type="evidence at protein level"/>
<keyword id="KW-0002">3D-structure</keyword>
<keyword id="KW-0997">Cell inner membrane</keyword>
<keyword id="KW-1003">Cell membrane</keyword>
<keyword id="KW-0406">Ion transport</keyword>
<keyword id="KW-0408">Iron</keyword>
<keyword id="KW-0410">Iron transport</keyword>
<keyword id="KW-0472">Membrane</keyword>
<keyword id="KW-0479">Metal-binding</keyword>
<keyword id="KW-1185">Reference proteome</keyword>
<keyword id="KW-0812">Transmembrane</keyword>
<keyword id="KW-1133">Transmembrane helix</keyword>
<keyword id="KW-0813">Transport</keyword>
<keyword id="KW-0862">Zinc</keyword>
<keyword id="KW-0864">Zinc transport</keyword>
<protein>
    <recommendedName>
        <fullName evidence="8">Cation-efflux pump FieF</fullName>
    </recommendedName>
    <alternativeName>
        <fullName evidence="9">Cadmium and zinc efflux pump FieF</fullName>
    </alternativeName>
    <alternativeName>
        <fullName evidence="7">Cation diffusion facilitator YiiP</fullName>
    </alternativeName>
</protein>
<reference evidence="10" key="1">
    <citation type="journal article" date="2002" name="Nat. Biotechnol.">
        <title>Genome sequence of the dissimilatory metal ion-reducing bacterium Shewanella oneidensis.</title>
        <authorList>
            <person name="Heidelberg J.F."/>
            <person name="Paulsen I.T."/>
            <person name="Nelson K.E."/>
            <person name="Gaidos E.J."/>
            <person name="Nelson W.C."/>
            <person name="Read T.D."/>
            <person name="Eisen J.A."/>
            <person name="Seshadri R."/>
            <person name="Ward N.L."/>
            <person name="Methe B.A."/>
            <person name="Clayton R.A."/>
            <person name="Meyer T."/>
            <person name="Tsapin A."/>
            <person name="Scott J."/>
            <person name="Beanan M.J."/>
            <person name="Brinkac L.M."/>
            <person name="Daugherty S.C."/>
            <person name="DeBoy R.T."/>
            <person name="Dodson R.J."/>
            <person name="Durkin A.S."/>
            <person name="Haft D.H."/>
            <person name="Kolonay J.F."/>
            <person name="Madupu R."/>
            <person name="Peterson J.D."/>
            <person name="Umayam L.A."/>
            <person name="White O."/>
            <person name="Wolf A.M."/>
            <person name="Vamathevan J.J."/>
            <person name="Weidman J.F."/>
            <person name="Impraim M."/>
            <person name="Lee K."/>
            <person name="Berry K.J."/>
            <person name="Lee C."/>
            <person name="Mueller J."/>
            <person name="Khouri H.M."/>
            <person name="Gill J."/>
            <person name="Utterback T.R."/>
            <person name="McDonald L.A."/>
            <person name="Feldblyum T.V."/>
            <person name="Smith H.O."/>
            <person name="Venter J.C."/>
            <person name="Nealson K.H."/>
            <person name="Fraser C.M."/>
        </authorList>
    </citation>
    <scope>NUCLEOTIDE SEQUENCE [LARGE SCALE GENOMIC DNA]</scope>
    <source>
        <strain evidence="10">ATCC 700550 / JCM 31522 / CIP 106686 / LMG 19005 / NCIMB 14063 / MR-1</strain>
    </source>
</reference>
<reference evidence="11" key="2">
    <citation type="journal article" date="2013" name="Proc. Natl. Acad. Sci. U.S.A.">
        <title>Inward-facing conformation of the zinc transporter YiiP revealed by cryoelectron microscopy.</title>
        <authorList>
            <person name="Coudray N."/>
            <person name="Valvo S."/>
            <person name="Hu M."/>
            <person name="Lasala R."/>
            <person name="Kim C."/>
            <person name="Vink M."/>
            <person name="Zhou M."/>
            <person name="Provasi D."/>
            <person name="Filizola M."/>
            <person name="Tao J."/>
            <person name="Fang J."/>
            <person name="Penczek P.A."/>
            <person name="Ubarretxena-Belandia I."/>
            <person name="Stokes D.L."/>
        </authorList>
    </citation>
    <scope>STRUCTURE BY ELECTRON MICROSCOPY (13.00 ANGSTROMS)</scope>
    <scope>FUNCTION</scope>
    <scope>CATALYTIC ACTIVITY</scope>
    <scope>BIOPHYSICOCHEMICAL PROPERTIES</scope>
</reference>
<reference evidence="12" key="3">
    <citation type="journal article" date="2018" name="Proc. Natl. Acad. Sci. U.S.A.">
        <title>Structural basis for the alternating access mechanism of the cation diffusion facilitator YiiP.</title>
        <authorList>
            <person name="Lopez-Redondo M.L."/>
            <person name="Coudray N."/>
            <person name="Zhang Z."/>
            <person name="Alexopoulos J."/>
            <person name="Stokes D.L."/>
        </authorList>
    </citation>
    <scope>STRUCTURE BY ELECTRON MICROSCOPY (4.10 ANGSTROMS) IN COMPLEX WITH ZINC</scope>
    <scope>FUNCTION</scope>
    <scope>CATALYTIC ACTIVITY</scope>
    <scope>SUBUNIT</scope>
    <scope>MUTAGENESIS OF ASP-51; LYS-79; ALA-90; GLY-94; LEU-98; TYR-102; CYS-190; HIS-263; HIS-285 AND ASP-287</scope>
</reference>
<reference evidence="13 14" key="4">
    <citation type="journal article" date="2021" name="J. Gen. Physiol.">
        <title>Zinc binding alters the conformational dynamics and drives the transport cycle of the cation diffusion facilitator YiiP.</title>
        <authorList>
            <person name="Lopez-Redondo M."/>
            <person name="Fan S."/>
            <person name="Koide A."/>
            <person name="Koide S."/>
            <person name="Beckstein O."/>
            <person name="Stokes D.L."/>
        </authorList>
    </citation>
    <scope>STRUCTURE BY ELECTRON MICROSCOPY (3.42 ANGSTROMS) IN APO FORM AND IN COMPLEX WITH ZINC</scope>
</reference>
<reference evidence="15 16 17 18 19 20" key="5">
    <citation type="submission" date="2022-11" db="PDB data bank">
        <title>Characterization of individual Zn2+ binding sites of YiiP.</title>
        <authorList>
            <person name="Lopez-Redondo M.L."/>
            <person name="Hussein A.K."/>
            <person name="Stokes D.L."/>
        </authorList>
    </citation>
    <scope>STRUCTURE BY ELECTRON MICROSCOPY (3.46 ANGSTROMS) IN COMPLEX WITH ZINC</scope>
</reference>
<name>FIEF_SHEON</name>
<dbReference type="EMBL" id="AE014299">
    <property type="protein sequence ID" value="AAN57440.1"/>
    <property type="molecule type" value="Genomic_DNA"/>
</dbReference>
<dbReference type="RefSeq" id="NP_719996.1">
    <property type="nucleotide sequence ID" value="NC_004347.2"/>
</dbReference>
<dbReference type="RefSeq" id="WP_011074103.1">
    <property type="nucleotide sequence ID" value="NC_004347.2"/>
</dbReference>
<dbReference type="PDB" id="3J1Z">
    <property type="method" value="EM"/>
    <property type="resolution" value="13.00 A"/>
    <property type="chains" value="P/Q=1-296"/>
</dbReference>
<dbReference type="PDB" id="5VRF">
    <property type="method" value="EM"/>
    <property type="resolution" value="4.10 A"/>
    <property type="chains" value="A/B=1-296"/>
</dbReference>
<dbReference type="PDB" id="7KZX">
    <property type="method" value="EM"/>
    <property type="resolution" value="4.00 A"/>
    <property type="chains" value="A/B=1-296"/>
</dbReference>
<dbReference type="PDB" id="7KZZ">
    <property type="method" value="EM"/>
    <property type="resolution" value="3.42 A"/>
    <property type="chains" value="A/B=1-296"/>
</dbReference>
<dbReference type="PDB" id="8F6E">
    <property type="method" value="EM"/>
    <property type="resolution" value="3.80 A"/>
    <property type="chains" value="A/B=1-296"/>
</dbReference>
<dbReference type="PDB" id="8F6F">
    <property type="method" value="EM"/>
    <property type="resolution" value="3.60 A"/>
    <property type="chains" value="A/B=1-296"/>
</dbReference>
<dbReference type="PDB" id="8F6H">
    <property type="method" value="EM"/>
    <property type="resolution" value="3.90 A"/>
    <property type="chains" value="A/B=1-296"/>
</dbReference>
<dbReference type="PDB" id="8F6I">
    <property type="method" value="EM"/>
    <property type="resolution" value="4.03 A"/>
    <property type="chains" value="A/B=1-296"/>
</dbReference>
<dbReference type="PDB" id="8F6J">
    <property type="method" value="EM"/>
    <property type="resolution" value="3.70 A"/>
    <property type="chains" value="A/B=1-296"/>
</dbReference>
<dbReference type="PDB" id="8F6K">
    <property type="method" value="EM"/>
    <property type="resolution" value="3.46 A"/>
    <property type="chains" value="A/B/C/D=1-296"/>
</dbReference>
<dbReference type="PDBsum" id="3J1Z"/>
<dbReference type="PDBsum" id="5VRF"/>
<dbReference type="PDBsum" id="7KZX"/>
<dbReference type="PDBsum" id="7KZZ"/>
<dbReference type="PDBsum" id="8F6E"/>
<dbReference type="PDBsum" id="8F6F"/>
<dbReference type="PDBsum" id="8F6H"/>
<dbReference type="PDBsum" id="8F6I"/>
<dbReference type="PDBsum" id="8F6J"/>
<dbReference type="PDBsum" id="8F6K"/>
<dbReference type="EMDB" id="EMD-23092"/>
<dbReference type="EMDB" id="EMD-23093"/>
<dbReference type="EMDB" id="EMD-28881"/>
<dbReference type="EMDB" id="EMD-28882"/>
<dbReference type="EMDB" id="EMD-28883"/>
<dbReference type="EMDB" id="EMD-28884"/>
<dbReference type="EMDB" id="EMD-28885"/>
<dbReference type="EMDB" id="EMD-28886"/>
<dbReference type="EMDB" id="EMD-5450"/>
<dbReference type="EMDB" id="EMD-8728"/>
<dbReference type="SMR" id="Q8E919"/>
<dbReference type="STRING" id="211586.SO_4475"/>
<dbReference type="TCDB" id="2.A.4.7.5">
    <property type="family name" value="the cation diffusion facilitator (cdf) family"/>
</dbReference>
<dbReference type="PaxDb" id="211586-SO_4475"/>
<dbReference type="KEGG" id="son:SO_4475"/>
<dbReference type="PATRIC" id="fig|211586.12.peg.4335"/>
<dbReference type="eggNOG" id="COG0053">
    <property type="taxonomic scope" value="Bacteria"/>
</dbReference>
<dbReference type="HOGENOM" id="CLU_013430_3_0_6"/>
<dbReference type="OrthoDB" id="9806522at2"/>
<dbReference type="PhylomeDB" id="Q8E919"/>
<dbReference type="BioCyc" id="SONE211586:G1GMP-4132-MONOMER"/>
<dbReference type="EvolutionaryTrace" id="Q8E919"/>
<dbReference type="Proteomes" id="UP000008186">
    <property type="component" value="Chromosome"/>
</dbReference>
<dbReference type="GO" id="GO:0005886">
    <property type="term" value="C:plasma membrane"/>
    <property type="evidence" value="ECO:0000318"/>
    <property type="project" value="GO_Central"/>
</dbReference>
<dbReference type="GO" id="GO:0015086">
    <property type="term" value="F:cadmium ion transmembrane transporter activity"/>
    <property type="evidence" value="ECO:0000318"/>
    <property type="project" value="GO_Central"/>
</dbReference>
<dbReference type="GO" id="GO:0015093">
    <property type="term" value="F:ferrous iron transmembrane transporter activity"/>
    <property type="evidence" value="ECO:0000318"/>
    <property type="project" value="GO_Central"/>
</dbReference>
<dbReference type="GO" id="GO:0046872">
    <property type="term" value="F:metal ion binding"/>
    <property type="evidence" value="ECO:0007669"/>
    <property type="project" value="UniProtKB-KW"/>
</dbReference>
<dbReference type="GO" id="GO:0015341">
    <property type="term" value="F:zinc efflux antiporter activity"/>
    <property type="evidence" value="ECO:0000318"/>
    <property type="project" value="GO_Central"/>
</dbReference>
<dbReference type="GO" id="GO:0006882">
    <property type="term" value="P:intracellular zinc ion homeostasis"/>
    <property type="evidence" value="ECO:0000318"/>
    <property type="project" value="GO_Central"/>
</dbReference>
<dbReference type="FunFam" id="1.20.1510.10:FF:000001">
    <property type="entry name" value="Ferrous-iron efflux pump FieF"/>
    <property type="match status" value="1"/>
</dbReference>
<dbReference type="FunFam" id="3.30.70.1350:FF:000002">
    <property type="entry name" value="Ferrous-iron efflux pump FieF"/>
    <property type="match status" value="1"/>
</dbReference>
<dbReference type="Gene3D" id="1.20.1510.10">
    <property type="entry name" value="Cation efflux protein transmembrane domain"/>
    <property type="match status" value="1"/>
</dbReference>
<dbReference type="Gene3D" id="3.30.70.1350">
    <property type="entry name" value="Cation efflux protein, cytoplasmic domain"/>
    <property type="match status" value="1"/>
</dbReference>
<dbReference type="InterPro" id="IPR002524">
    <property type="entry name" value="Cation_efflux"/>
</dbReference>
<dbReference type="InterPro" id="IPR027470">
    <property type="entry name" value="Cation_efflux_CTD"/>
</dbReference>
<dbReference type="InterPro" id="IPR036837">
    <property type="entry name" value="Cation_efflux_CTD_sf"/>
</dbReference>
<dbReference type="InterPro" id="IPR027469">
    <property type="entry name" value="Cation_efflux_TMD_sf"/>
</dbReference>
<dbReference type="InterPro" id="IPR050291">
    <property type="entry name" value="CDF_Transporter"/>
</dbReference>
<dbReference type="NCBIfam" id="TIGR01297">
    <property type="entry name" value="CDF"/>
    <property type="match status" value="1"/>
</dbReference>
<dbReference type="PANTHER" id="PTHR43840:SF41">
    <property type="entry name" value="CATION-EFFLUX PUMP FIEF"/>
    <property type="match status" value="1"/>
</dbReference>
<dbReference type="PANTHER" id="PTHR43840">
    <property type="entry name" value="MITOCHONDRIAL METAL TRANSPORTER 1-RELATED"/>
    <property type="match status" value="1"/>
</dbReference>
<dbReference type="Pfam" id="PF01545">
    <property type="entry name" value="Cation_efflux"/>
    <property type="match status" value="1"/>
</dbReference>
<dbReference type="Pfam" id="PF16916">
    <property type="entry name" value="ZT_dimer"/>
    <property type="match status" value="1"/>
</dbReference>
<dbReference type="SUPFAM" id="SSF160240">
    <property type="entry name" value="Cation efflux protein cytoplasmic domain-like"/>
    <property type="match status" value="1"/>
</dbReference>
<dbReference type="SUPFAM" id="SSF161111">
    <property type="entry name" value="Cation efflux protein transmembrane domain-like"/>
    <property type="match status" value="1"/>
</dbReference>
<comment type="function">
    <text evidence="1 3 4 5">Divalent metal cation transporter which exports Zn(2+), Cd(2+) and possibly Fe(2+) (PubMed:23341604, PubMed:29507252). Zn(2+)/H(+) antiporter capable of using the proton motive force to remove Zn(2+) from the cytoplasm (PubMed:34254979). May be involved in zinc and iron detoxification by efflux (By similarity).</text>
</comment>
<comment type="catalytic activity">
    <reaction evidence="3">
        <text>Zn(2+)(in) + H(+)(out) = Zn(2+)(out) + H(+)(in)</text>
        <dbReference type="Rhea" id="RHEA:28839"/>
        <dbReference type="ChEBI" id="CHEBI:15378"/>
        <dbReference type="ChEBI" id="CHEBI:29105"/>
    </reaction>
</comment>
<comment type="catalytic activity">
    <reaction evidence="3">
        <text>Cd(2+)(in) + H(+)(out) = Cd(2+)(out) + H(+)(in)</text>
        <dbReference type="Rhea" id="RHEA:28739"/>
        <dbReference type="ChEBI" id="CHEBI:15378"/>
        <dbReference type="ChEBI" id="CHEBI:48775"/>
    </reaction>
</comment>
<comment type="catalytic activity">
    <reaction evidence="1">
        <text>Fe(2+)(in) + H(+)(out) = Fe(2+)(out) + H(+)(in)</text>
        <dbReference type="Rhea" id="RHEA:29439"/>
        <dbReference type="ChEBI" id="CHEBI:15378"/>
        <dbReference type="ChEBI" id="CHEBI:29033"/>
    </reaction>
</comment>
<comment type="activity regulation">
    <text evidence="1">Cytoplasmic zinc binding may trigger movements of two electrically repulsive cytoplasmic domains and reorient transmembrane helices, thereby modulating coordination geometry of the active site for zinc transport. It may modulate activity in response to cytoplasmic metal fluctuations.</text>
</comment>
<comment type="biophysicochemical properties">
    <phDependence>
        <text evidence="3">Optimum pH is 7.8.</text>
    </phDependence>
</comment>
<comment type="subunit">
    <text evidence="1 4">Homodimer (PubMed:29507252). The subunits are held together in a parallel orientation through zinc binding at the interface of the cytoplasmic domains (By similarity).</text>
</comment>
<comment type="subcellular location">
    <subcellularLocation>
        <location evidence="1">Cell inner membrane</location>
        <topology evidence="2">Multi-pass membrane protein</topology>
    </subcellularLocation>
</comment>
<comment type="similarity">
    <text evidence="8">Belongs to the cation diffusion facilitator (CDF) transporter (TC 2.A.4) family. FieF subfamily.</text>
</comment>
<evidence type="ECO:0000250" key="1">
    <source>
        <dbReference type="UniProtKB" id="P69380"/>
    </source>
</evidence>
<evidence type="ECO:0000255" key="2"/>
<evidence type="ECO:0000269" key="3">
    <source>
    </source>
</evidence>
<evidence type="ECO:0000269" key="4">
    <source>
    </source>
</evidence>
<evidence type="ECO:0000269" key="5">
    <source>
    </source>
</evidence>
<evidence type="ECO:0000269" key="6">
    <source ref="5"/>
</evidence>
<evidence type="ECO:0000303" key="7">
    <source>
    </source>
</evidence>
<evidence type="ECO:0000305" key="8"/>
<evidence type="ECO:0000312" key="9">
    <source>
        <dbReference type="EMBL" id="AAN57440.1"/>
    </source>
</evidence>
<evidence type="ECO:0000312" key="10">
    <source>
        <dbReference type="Proteomes" id="UP000008186"/>
    </source>
</evidence>
<evidence type="ECO:0007744" key="11">
    <source>
        <dbReference type="PDB" id="3J1Z"/>
    </source>
</evidence>
<evidence type="ECO:0007744" key="12">
    <source>
        <dbReference type="PDB" id="5VRF"/>
    </source>
</evidence>
<evidence type="ECO:0007744" key="13">
    <source>
        <dbReference type="PDB" id="7KZX"/>
    </source>
</evidence>
<evidence type="ECO:0007744" key="14">
    <source>
        <dbReference type="PDB" id="7KZZ"/>
    </source>
</evidence>
<evidence type="ECO:0007744" key="15">
    <source>
        <dbReference type="PDB" id="8F6E"/>
    </source>
</evidence>
<evidence type="ECO:0007744" key="16">
    <source>
        <dbReference type="PDB" id="8F6F"/>
    </source>
</evidence>
<evidence type="ECO:0007744" key="17">
    <source>
        <dbReference type="PDB" id="8F6H"/>
    </source>
</evidence>
<evidence type="ECO:0007744" key="18">
    <source>
        <dbReference type="PDB" id="8F6I"/>
    </source>
</evidence>
<evidence type="ECO:0007744" key="19">
    <source>
        <dbReference type="PDB" id="8F6J"/>
    </source>
</evidence>
<evidence type="ECO:0007744" key="20">
    <source>
        <dbReference type="PDB" id="8F6K"/>
    </source>
</evidence>
<evidence type="ECO:0007829" key="21">
    <source>
        <dbReference type="PDB" id="7KZZ"/>
    </source>
</evidence>
<evidence type="ECO:0007829" key="22">
    <source>
        <dbReference type="PDB" id="8F6K"/>
    </source>
</evidence>
<accession>Q8E919</accession>
<organism evidence="10">
    <name type="scientific">Shewanella oneidensis (strain ATCC 700550 / JCM 31522 / CIP 106686 / LMG 19005 / NCIMB 14063 / MR-1)</name>
    <dbReference type="NCBI Taxonomy" id="211586"/>
    <lineage>
        <taxon>Bacteria</taxon>
        <taxon>Pseudomonadati</taxon>
        <taxon>Pseudomonadota</taxon>
        <taxon>Gammaproteobacteria</taxon>
        <taxon>Alteromonadales</taxon>
        <taxon>Shewanellaceae</taxon>
        <taxon>Shewanella</taxon>
    </lineage>
</organism>
<feature type="chain" id="PRO_0000458900" description="Cation-efflux pump FieF">
    <location>
        <begin position="1"/>
        <end position="296"/>
    </location>
</feature>
<feature type="topological domain" description="Cytoplasmic" evidence="1">
    <location>
        <begin position="1"/>
        <end position="18"/>
    </location>
</feature>
<feature type="transmembrane region" description="Helical" evidence="1">
    <location>
        <begin position="19"/>
        <end position="32"/>
    </location>
</feature>
<feature type="topological domain" description="Periplasmic" evidence="1">
    <location>
        <begin position="33"/>
        <end position="43"/>
    </location>
</feature>
<feature type="transmembrane region" description="Helical" evidence="1">
    <location>
        <begin position="44"/>
        <end position="60"/>
    </location>
</feature>
<feature type="topological domain" description="Cytoplasmic" evidence="1">
    <location>
        <begin position="61"/>
        <end position="83"/>
    </location>
</feature>
<feature type="transmembrane region" description="Helical" evidence="1">
    <location>
        <begin position="84"/>
        <end position="105"/>
    </location>
</feature>
<feature type="topological domain" description="Periplasmic" evidence="1">
    <location>
        <begin position="106"/>
        <end position="119"/>
    </location>
</feature>
<feature type="transmembrane region" description="Helical" evidence="1">
    <location>
        <begin position="120"/>
        <end position="138"/>
    </location>
</feature>
<feature type="topological domain" description="Cytoplasmic" evidence="1">
    <location>
        <begin position="139"/>
        <end position="145"/>
    </location>
</feature>
<feature type="transmembrane region" description="Helical" evidence="1">
    <location>
        <begin position="146"/>
        <end position="160"/>
    </location>
</feature>
<feature type="topological domain" description="Periplasmic" evidence="1">
    <location>
        <begin position="161"/>
        <end position="180"/>
    </location>
</feature>
<feature type="transmembrane region" description="Helical" evidence="1">
    <location>
        <begin position="181"/>
        <end position="200"/>
    </location>
</feature>
<feature type="topological domain" description="Cytoplasmic" evidence="1">
    <location>
        <begin position="201"/>
        <end position="296"/>
    </location>
</feature>
<feature type="binding site" evidence="4 5 6 12 14 15 17 18 19 20">
    <location>
        <position position="47"/>
    </location>
    <ligand>
        <name>Zn(2+)</name>
        <dbReference type="ChEBI" id="CHEBI:29105"/>
        <label>1</label>
        <note>transported zinc</note>
    </ligand>
</feature>
<feature type="binding site" evidence="4 5 6 12 14 15 17 18 19">
    <location>
        <position position="51"/>
    </location>
    <ligand>
        <name>Zn(2+)</name>
        <dbReference type="ChEBI" id="CHEBI:29105"/>
        <label>1</label>
        <note>transported zinc</note>
    </ligand>
</feature>
<feature type="binding site" evidence="4 5 6 12 14 15 16 19">
    <location>
        <position position="70"/>
    </location>
    <ligand>
        <name>Zn(2+)</name>
        <dbReference type="ChEBI" id="CHEBI:29105"/>
        <label>2</label>
        <note>regulatory</note>
    </ligand>
</feature>
<feature type="binding site" evidence="4 5 6 12 14 15 16 19">
    <location>
        <position position="73"/>
    </location>
    <ligand>
        <name>Zn(2+)</name>
        <dbReference type="ChEBI" id="CHEBI:29105"/>
        <label>2</label>
        <note>regulatory</note>
    </ligand>
</feature>
<feature type="binding site" evidence="4 5 6 12 14 15 19">
    <location>
        <position position="77"/>
    </location>
    <ligand>
        <name>Zn(2+)</name>
        <dbReference type="ChEBI" id="CHEBI:29105"/>
        <label>2</label>
        <note>regulatory</note>
    </ligand>
</feature>
<feature type="binding site" evidence="4 5 6 12 14 15 17 18 20">
    <location>
        <position position="155"/>
    </location>
    <ligand>
        <name>Zn(2+)</name>
        <dbReference type="ChEBI" id="CHEBI:29105"/>
        <label>1</label>
        <note>transported zinc</note>
    </ligand>
</feature>
<feature type="binding site" evidence="4 5 6 12 14 15 17 18 20">
    <location>
        <position position="159"/>
    </location>
    <ligand>
        <name>Zn(2+)</name>
        <dbReference type="ChEBI" id="CHEBI:29105"/>
        <label>1</label>
        <note>transported zinc</note>
    </ligand>
</feature>
<feature type="binding site" evidence="4 5 6 12 14 17">
    <location>
        <position position="234"/>
    </location>
    <ligand>
        <name>Zn(2+)</name>
        <dbReference type="ChEBI" id="CHEBI:29105"/>
        <label>3</label>
        <note>regulatory</note>
    </ligand>
</feature>
<feature type="binding site" evidence="4 5 12 14">
    <location>
        <position position="235"/>
    </location>
    <ligand>
        <name>Zn(2+)</name>
        <dbReference type="ChEBI" id="CHEBI:29105"/>
        <label>3</label>
        <note>regulatory</note>
    </ligand>
</feature>
<feature type="binding site" evidence="4 5 6 12 14 16 17 18 19">
    <location>
        <position position="250"/>
    </location>
    <ligand>
        <name>Zn(2+)</name>
        <dbReference type="ChEBI" id="CHEBI:29105"/>
        <label>3</label>
        <note>regulatory</note>
    </ligand>
</feature>
<feature type="binding site" evidence="4 5 6 12 14 15 16 17 18 19">
    <location>
        <position position="263"/>
    </location>
    <ligand>
        <name>Zn(2+)</name>
        <dbReference type="ChEBI" id="CHEBI:29105"/>
        <label>4</label>
        <note>regulatory</note>
    </ligand>
</feature>
<feature type="binding site" evidence="4 5 6 12 14 15 16 17 18 19">
    <location>
        <position position="285"/>
    </location>
    <ligand>
        <name>Zn(2+)</name>
        <dbReference type="ChEBI" id="CHEBI:29105"/>
        <label>4</label>
        <note>regulatory</note>
    </ligand>
</feature>
<feature type="binding site" evidence="4 5 6 12 14 15 16 17 18">
    <location>
        <position position="287"/>
    </location>
    <ligand>
        <name>Zn(2+)</name>
        <dbReference type="ChEBI" id="CHEBI:29105"/>
        <label>3</label>
        <note>regulatory</note>
    </ligand>
</feature>
<feature type="binding site" evidence="4 5 6 12 14 15 16 17 18">
    <location>
        <position position="287"/>
    </location>
    <ligand>
        <name>Zn(2+)</name>
        <dbReference type="ChEBI" id="CHEBI:29105"/>
        <label>4</label>
        <note>regulatory</note>
    </ligand>
</feature>
<feature type="mutagenesis site" description="Abolished Zn(2+) transport activity. No impact on dimer formation." evidence="4">
    <original>D</original>
    <variation>A</variation>
    <location>
        <position position="51"/>
    </location>
</feature>
<feature type="mutagenesis site" description="Abolished Zn(2+) transport activity. No impact on dimer formation." evidence="4">
    <original>K</original>
    <variation>D</variation>
    <location>
        <position position="79"/>
    </location>
</feature>
<feature type="mutagenesis site" description="No impact on dimer formation; when associated with Ala-190." evidence="4">
    <original>A</original>
    <variation>C</variation>
    <location>
        <position position="90"/>
    </location>
</feature>
<feature type="mutagenesis site" description="No impact on dimer formation; when associated with Ala-190." evidence="4">
    <original>G</original>
    <variation>C</variation>
    <location>
        <position position="94"/>
    </location>
</feature>
<feature type="mutagenesis site" description="No impact on dimer formation; when associated with Ala-190." evidence="4">
    <original>L</original>
    <variation>C</variation>
    <location>
        <position position="98"/>
    </location>
</feature>
<feature type="mutagenesis site" description="No impact on dimer formation; when associated with Ala-190." evidence="4">
    <original>Y</original>
    <variation>C</variation>
    <location>
        <position position="102"/>
    </location>
</feature>
<feature type="mutagenesis site" description="No impact on dimer formation; when associated with Cys-90, Cys-94, Cys-98 or Cys-102." evidence="4">
    <original>C</original>
    <variation>A</variation>
    <location>
        <position position="190"/>
    </location>
</feature>
<feature type="mutagenesis site" description="No impact on dimer formation; when associated with Ala-287." evidence="4">
    <original>H</original>
    <variation>A</variation>
    <location>
        <position position="263"/>
    </location>
</feature>
<feature type="mutagenesis site" description="No impact on dimer formation; when associated with Ala-287." evidence="4">
    <original>H</original>
    <variation>A</variation>
    <location>
        <position position="285"/>
    </location>
</feature>
<feature type="mutagenesis site" description="No impact on dimer formation; when associated with Ala-263 or Ala-285." evidence="4">
    <original>D</original>
    <variation>A</variation>
    <location>
        <position position="287"/>
    </location>
</feature>
<feature type="turn" evidence="22">
    <location>
        <begin position="7"/>
        <end position="10"/>
    </location>
</feature>
<feature type="helix" evidence="21">
    <location>
        <begin position="14"/>
        <end position="32"/>
    </location>
</feature>
<feature type="turn" evidence="21">
    <location>
        <begin position="33"/>
        <end position="35"/>
    </location>
</feature>
<feature type="helix" evidence="21">
    <location>
        <begin position="39"/>
        <end position="65"/>
    </location>
</feature>
<feature type="strand" evidence="22">
    <location>
        <begin position="67"/>
        <end position="71"/>
    </location>
</feature>
<feature type="helix" evidence="21">
    <location>
        <begin position="78"/>
        <end position="80"/>
    </location>
</feature>
<feature type="helix" evidence="21">
    <location>
        <begin position="82"/>
        <end position="105"/>
    </location>
</feature>
<feature type="turn" evidence="21">
    <location>
        <begin position="106"/>
        <end position="108"/>
    </location>
</feature>
<feature type="helix" evidence="21">
    <location>
        <begin position="116"/>
        <end position="141"/>
    </location>
</feature>
<feature type="turn" evidence="21">
    <location>
        <begin position="148"/>
        <end position="150"/>
    </location>
</feature>
<feature type="helix" evidence="21">
    <location>
        <begin position="151"/>
        <end position="173"/>
    </location>
</feature>
<feature type="turn" evidence="21">
    <location>
        <begin position="174"/>
        <end position="176"/>
    </location>
</feature>
<feature type="helix" evidence="21">
    <location>
        <begin position="178"/>
        <end position="204"/>
    </location>
</feature>
<feature type="turn" evidence="21">
    <location>
        <begin position="205"/>
        <end position="207"/>
    </location>
</feature>
<feature type="helix" evidence="21">
    <location>
        <begin position="215"/>
        <end position="223"/>
    </location>
</feature>
<feature type="helix" evidence="21">
    <location>
        <begin position="224"/>
        <end position="226"/>
    </location>
</feature>
<feature type="strand" evidence="21">
    <location>
        <begin position="232"/>
        <end position="234"/>
    </location>
</feature>
<feature type="strand" evidence="21">
    <location>
        <begin position="239"/>
        <end position="241"/>
    </location>
</feature>
<feature type="strand" evidence="21">
    <location>
        <begin position="244"/>
        <end position="254"/>
    </location>
</feature>
<feature type="helix" evidence="21">
    <location>
        <begin position="259"/>
        <end position="275"/>
    </location>
</feature>
<feature type="strand" evidence="22">
    <location>
        <begin position="276"/>
        <end position="279"/>
    </location>
</feature>
<feature type="strand" evidence="21">
    <location>
        <begin position="281"/>
        <end position="289"/>
    </location>
</feature>
<sequence>MTQTSQYDFWVKLASRASVATALTLITIKLLAWLYSGSASMLASLTDSFADTLASIINFIAIRYAIVPADHDHRYGHGKAEPLAALAQSAFIMGSAFLLLFYGGERLLNPSPVENATLGVVVSVVAIVLTLALVLLQKRALAATNSTVVEADSLHYKSDLFLNAAVLLALVLSQYGWWWADGLFAVLIACYIGQQAFDLGYRSIQALLDRELDEDTRQRIKLIAKEDPRVLGLHDLRTRQAGKTVFIQFHLELDGNLSLNEAHSITDTTGLRVKAAFEDAEVIIHQDPVQVEPTTQ</sequence>